<gene>
    <name evidence="1" type="primary">fmt</name>
    <name type="ordered locus">Tery_1769</name>
</gene>
<feature type="chain" id="PRO_1000020200" description="Methionyl-tRNA formyltransferase">
    <location>
        <begin position="1"/>
        <end position="336"/>
    </location>
</feature>
<feature type="binding site" evidence="1">
    <location>
        <begin position="112"/>
        <end position="115"/>
    </location>
    <ligand>
        <name>(6S)-5,6,7,8-tetrahydrofolate</name>
        <dbReference type="ChEBI" id="CHEBI:57453"/>
    </ligand>
</feature>
<accession>Q114P5</accession>
<reference key="1">
    <citation type="journal article" date="2015" name="Proc. Natl. Acad. Sci. U.S.A.">
        <title>Trichodesmium genome maintains abundant, widespread noncoding DNA in situ, despite oligotrophic lifestyle.</title>
        <authorList>
            <person name="Walworth N."/>
            <person name="Pfreundt U."/>
            <person name="Nelson W.C."/>
            <person name="Mincer T."/>
            <person name="Heidelberg J.F."/>
            <person name="Fu F."/>
            <person name="Waterbury J.B."/>
            <person name="Glavina del Rio T."/>
            <person name="Goodwin L."/>
            <person name="Kyrpides N.C."/>
            <person name="Land M.L."/>
            <person name="Woyke T."/>
            <person name="Hutchins D.A."/>
            <person name="Hess W.R."/>
            <person name="Webb E.A."/>
        </authorList>
    </citation>
    <scope>NUCLEOTIDE SEQUENCE [LARGE SCALE GENOMIC DNA]</scope>
    <source>
        <strain>IMS101</strain>
    </source>
</reference>
<sequence>MMKIIFFGTPLFAVPTLKKLLDNPKIEVTAVVTQPDKRRGRGNKLIPSPVKSVAVAHNIPVWQPRRVKKNPETLNLLREAQADVFVVVAYGQILSTEILEMPKLGCVNVHGSILPKYRGAAPIQWSIYHGEAETGNTTMLMDVGMDTGPMLLKSIIPIGLLDNAVSIAEILAKDGADLLLETLLRLEDKEIEPIPQDNSLATYAPLIQNSDYEIDWSRSALDIHNQIRGFFPNCFTSFRGQSLKVMATIPVGTEYWSELPPELQKLEKVWSSESEVVGNIGEVVKVIKGLGPVVQTGSGWLLLWQVQLAGKKVVSGWDFANGTRLLVGEVSEVFSR</sequence>
<protein>
    <recommendedName>
        <fullName evidence="1">Methionyl-tRNA formyltransferase</fullName>
        <ecNumber evidence="1">2.1.2.9</ecNumber>
    </recommendedName>
</protein>
<name>FMT_TRIEI</name>
<organism>
    <name type="scientific">Trichodesmium erythraeum (strain IMS101)</name>
    <dbReference type="NCBI Taxonomy" id="203124"/>
    <lineage>
        <taxon>Bacteria</taxon>
        <taxon>Bacillati</taxon>
        <taxon>Cyanobacteriota</taxon>
        <taxon>Cyanophyceae</taxon>
        <taxon>Oscillatoriophycideae</taxon>
        <taxon>Oscillatoriales</taxon>
        <taxon>Microcoleaceae</taxon>
        <taxon>Trichodesmium</taxon>
    </lineage>
</organism>
<keyword id="KW-0648">Protein biosynthesis</keyword>
<keyword id="KW-0808">Transferase</keyword>
<dbReference type="EC" id="2.1.2.9" evidence="1"/>
<dbReference type="EMBL" id="CP000393">
    <property type="protein sequence ID" value="ABG51029.1"/>
    <property type="molecule type" value="Genomic_DNA"/>
</dbReference>
<dbReference type="SMR" id="Q114P5"/>
<dbReference type="STRING" id="203124.Tery_1769"/>
<dbReference type="KEGG" id="ter:Tery_1769"/>
<dbReference type="eggNOG" id="COG0223">
    <property type="taxonomic scope" value="Bacteria"/>
</dbReference>
<dbReference type="HOGENOM" id="CLU_033347_1_1_3"/>
<dbReference type="GO" id="GO:0005829">
    <property type="term" value="C:cytosol"/>
    <property type="evidence" value="ECO:0007669"/>
    <property type="project" value="TreeGrafter"/>
</dbReference>
<dbReference type="GO" id="GO:0004479">
    <property type="term" value="F:methionyl-tRNA formyltransferase activity"/>
    <property type="evidence" value="ECO:0007669"/>
    <property type="project" value="UniProtKB-UniRule"/>
</dbReference>
<dbReference type="CDD" id="cd08646">
    <property type="entry name" value="FMT_core_Met-tRNA-FMT_N"/>
    <property type="match status" value="1"/>
</dbReference>
<dbReference type="CDD" id="cd08704">
    <property type="entry name" value="Met_tRNA_FMT_C"/>
    <property type="match status" value="1"/>
</dbReference>
<dbReference type="FunFam" id="3.40.50.12230:FF:000001">
    <property type="entry name" value="Methionyl-tRNA formyltransferase"/>
    <property type="match status" value="1"/>
</dbReference>
<dbReference type="Gene3D" id="3.40.50.12230">
    <property type="match status" value="1"/>
</dbReference>
<dbReference type="HAMAP" id="MF_00182">
    <property type="entry name" value="Formyl_trans"/>
    <property type="match status" value="1"/>
</dbReference>
<dbReference type="InterPro" id="IPR005794">
    <property type="entry name" value="Fmt"/>
</dbReference>
<dbReference type="InterPro" id="IPR005793">
    <property type="entry name" value="Formyl_trans_C"/>
</dbReference>
<dbReference type="InterPro" id="IPR002376">
    <property type="entry name" value="Formyl_transf_N"/>
</dbReference>
<dbReference type="InterPro" id="IPR036477">
    <property type="entry name" value="Formyl_transf_N_sf"/>
</dbReference>
<dbReference type="InterPro" id="IPR011034">
    <property type="entry name" value="Formyl_transferase-like_C_sf"/>
</dbReference>
<dbReference type="InterPro" id="IPR001555">
    <property type="entry name" value="GART_AS"/>
</dbReference>
<dbReference type="InterPro" id="IPR044135">
    <property type="entry name" value="Met-tRNA-FMT_C"/>
</dbReference>
<dbReference type="InterPro" id="IPR041711">
    <property type="entry name" value="Met-tRNA-FMT_N"/>
</dbReference>
<dbReference type="NCBIfam" id="TIGR00460">
    <property type="entry name" value="fmt"/>
    <property type="match status" value="1"/>
</dbReference>
<dbReference type="PANTHER" id="PTHR11138">
    <property type="entry name" value="METHIONYL-TRNA FORMYLTRANSFERASE"/>
    <property type="match status" value="1"/>
</dbReference>
<dbReference type="PANTHER" id="PTHR11138:SF5">
    <property type="entry name" value="METHIONYL-TRNA FORMYLTRANSFERASE, MITOCHONDRIAL"/>
    <property type="match status" value="1"/>
</dbReference>
<dbReference type="Pfam" id="PF02911">
    <property type="entry name" value="Formyl_trans_C"/>
    <property type="match status" value="1"/>
</dbReference>
<dbReference type="Pfam" id="PF00551">
    <property type="entry name" value="Formyl_trans_N"/>
    <property type="match status" value="1"/>
</dbReference>
<dbReference type="SUPFAM" id="SSF50486">
    <property type="entry name" value="FMT C-terminal domain-like"/>
    <property type="match status" value="1"/>
</dbReference>
<dbReference type="SUPFAM" id="SSF53328">
    <property type="entry name" value="Formyltransferase"/>
    <property type="match status" value="1"/>
</dbReference>
<dbReference type="PROSITE" id="PS00373">
    <property type="entry name" value="GART"/>
    <property type="match status" value="1"/>
</dbReference>
<evidence type="ECO:0000255" key="1">
    <source>
        <dbReference type="HAMAP-Rule" id="MF_00182"/>
    </source>
</evidence>
<comment type="function">
    <text evidence="1">Attaches a formyl group to the free amino group of methionyl-tRNA(fMet). The formyl group appears to play a dual role in the initiator identity of N-formylmethionyl-tRNA by promoting its recognition by IF2 and preventing the misappropriation of this tRNA by the elongation apparatus.</text>
</comment>
<comment type="catalytic activity">
    <reaction evidence="1">
        <text>L-methionyl-tRNA(fMet) + (6R)-10-formyltetrahydrofolate = N-formyl-L-methionyl-tRNA(fMet) + (6S)-5,6,7,8-tetrahydrofolate + H(+)</text>
        <dbReference type="Rhea" id="RHEA:24380"/>
        <dbReference type="Rhea" id="RHEA-COMP:9952"/>
        <dbReference type="Rhea" id="RHEA-COMP:9953"/>
        <dbReference type="ChEBI" id="CHEBI:15378"/>
        <dbReference type="ChEBI" id="CHEBI:57453"/>
        <dbReference type="ChEBI" id="CHEBI:78530"/>
        <dbReference type="ChEBI" id="CHEBI:78844"/>
        <dbReference type="ChEBI" id="CHEBI:195366"/>
        <dbReference type="EC" id="2.1.2.9"/>
    </reaction>
</comment>
<comment type="similarity">
    <text evidence="1">Belongs to the Fmt family.</text>
</comment>
<proteinExistence type="inferred from homology"/>